<feature type="chain" id="PRO_0000201547" description="Uncharacterized protein RC0356">
    <location>
        <begin position="1"/>
        <end position="215"/>
    </location>
</feature>
<feature type="transmembrane region" description="Helical" evidence="1">
    <location>
        <begin position="21"/>
        <end position="40"/>
    </location>
</feature>
<feature type="transmembrane region" description="Helical" evidence="1">
    <location>
        <begin position="50"/>
        <end position="69"/>
    </location>
</feature>
<feature type="transmembrane region" description="Helical" evidence="1">
    <location>
        <begin position="95"/>
        <end position="117"/>
    </location>
</feature>
<feature type="transmembrane region" description="Helical" evidence="1">
    <location>
        <begin position="122"/>
        <end position="144"/>
    </location>
</feature>
<feature type="transmembrane region" description="Helical" evidence="1">
    <location>
        <begin position="156"/>
        <end position="178"/>
    </location>
</feature>
<feature type="transmembrane region" description="Helical" evidence="1">
    <location>
        <begin position="183"/>
        <end position="205"/>
    </location>
</feature>
<proteinExistence type="inferred from homology"/>
<keyword id="KW-1003">Cell membrane</keyword>
<keyword id="KW-0472">Membrane</keyword>
<keyword id="KW-0812">Transmembrane</keyword>
<keyword id="KW-1133">Transmembrane helix</keyword>
<comment type="subcellular location">
    <subcellularLocation>
        <location evidence="2">Cell membrane</location>
        <topology evidence="2">Multi-pass membrane protein</topology>
    </subcellularLocation>
</comment>
<comment type="similarity">
    <text evidence="2">Belongs to the CcmB/CycW/HelB family.</text>
</comment>
<organism>
    <name type="scientific">Rickettsia conorii (strain ATCC VR-613 / Malish 7)</name>
    <dbReference type="NCBI Taxonomy" id="272944"/>
    <lineage>
        <taxon>Bacteria</taxon>
        <taxon>Pseudomonadati</taxon>
        <taxon>Pseudomonadota</taxon>
        <taxon>Alphaproteobacteria</taxon>
        <taxon>Rickettsiales</taxon>
        <taxon>Rickettsiaceae</taxon>
        <taxon>Rickettsieae</taxon>
        <taxon>Rickettsia</taxon>
        <taxon>spotted fever group</taxon>
    </lineage>
</organism>
<gene>
    <name type="ordered locus">RC0356</name>
</gene>
<accession>Q92IR4</accession>
<reference key="1">
    <citation type="journal article" date="2001" name="Science">
        <title>Mechanisms of evolution in Rickettsia conorii and R. prowazekii.</title>
        <authorList>
            <person name="Ogata H."/>
            <person name="Audic S."/>
            <person name="Renesto-Audiffren P."/>
            <person name="Fournier P.-E."/>
            <person name="Barbe V."/>
            <person name="Samson D."/>
            <person name="Roux V."/>
            <person name="Cossart P."/>
            <person name="Weissenbach J."/>
            <person name="Claverie J.-M."/>
            <person name="Raoult D."/>
        </authorList>
    </citation>
    <scope>NUCLEOTIDE SEQUENCE [LARGE SCALE GENOMIC DNA]</scope>
    <source>
        <strain>ATCC VR-613 / Malish 7</strain>
    </source>
</reference>
<sequence>MNSLFVLIKRELIVQNRINNIIKYLVIFFLFCIISTVLINSERDINKFGLIFSVICLLISLIGFSSVIFKSDLEDGSLELLLSIVSHEKIILAKFFAIFISSTIGLVFVLPIIYVLFDKTLLEIIFFFSSVWMILVLSSSLVVLSGSVQCYFKKNANFVGTFIMPLLIPNIIMTGLILQDNNLQLIFIMIGINLVFLPISFFLSSCLIKNIYNIT</sequence>
<name>Y356_RICCN</name>
<protein>
    <recommendedName>
        <fullName>Uncharacterized protein RC0356</fullName>
    </recommendedName>
</protein>
<dbReference type="EMBL" id="AE006914">
    <property type="protein sequence ID" value="AAL02894.1"/>
    <property type="molecule type" value="Genomic_DNA"/>
</dbReference>
<dbReference type="PIR" id="D97744">
    <property type="entry name" value="D97744"/>
</dbReference>
<dbReference type="RefSeq" id="WP_010977011.1">
    <property type="nucleotide sequence ID" value="NC_003103.1"/>
</dbReference>
<dbReference type="SMR" id="Q92IR4"/>
<dbReference type="GeneID" id="927520"/>
<dbReference type="KEGG" id="rco:RC0356"/>
<dbReference type="PATRIC" id="fig|272944.4.peg.405"/>
<dbReference type="HOGENOM" id="CLU_1282407_0_0_5"/>
<dbReference type="Proteomes" id="UP000000816">
    <property type="component" value="Chromosome"/>
</dbReference>
<dbReference type="GO" id="GO:0005886">
    <property type="term" value="C:plasma membrane"/>
    <property type="evidence" value="ECO:0007669"/>
    <property type="project" value="UniProtKB-SubCell"/>
</dbReference>
<dbReference type="GO" id="GO:0015232">
    <property type="term" value="F:heme transmembrane transporter activity"/>
    <property type="evidence" value="ECO:0007669"/>
    <property type="project" value="InterPro"/>
</dbReference>
<dbReference type="GO" id="GO:0017004">
    <property type="term" value="P:cytochrome complex assembly"/>
    <property type="evidence" value="ECO:0007669"/>
    <property type="project" value="InterPro"/>
</dbReference>
<dbReference type="InterPro" id="IPR003544">
    <property type="entry name" value="Cyt_c_biogenesis_CcmB"/>
</dbReference>
<dbReference type="Pfam" id="PF03379">
    <property type="entry name" value="CcmB"/>
    <property type="match status" value="1"/>
</dbReference>
<evidence type="ECO:0000255" key="1"/>
<evidence type="ECO:0000305" key="2"/>